<comment type="function">
    <text evidence="1">Cleaves peptides in various proteins in a process that requires ATP hydrolysis. Has a chymotrypsin-like activity. Plays a major role in the degradation of misfolded proteins.</text>
</comment>
<comment type="catalytic activity">
    <reaction evidence="1">
        <text>Hydrolysis of proteins to small peptides in the presence of ATP and magnesium. alpha-casein is the usual test substrate. In the absence of ATP, only oligopeptides shorter than five residues are hydrolyzed (such as succinyl-Leu-Tyr-|-NHMec, and Leu-Tyr-Leu-|-Tyr-Trp, in which cleavage of the -Tyr-|-Leu- and -Tyr-|-Trp bonds also occurs).</text>
        <dbReference type="EC" id="3.4.21.92"/>
    </reaction>
</comment>
<comment type="subunit">
    <text evidence="1">Fourteen ClpP subunits assemble into 2 heptameric rings which stack back to back to give a disk-like structure with a central cavity, resembling the structure of eukaryotic proteasomes.</text>
</comment>
<comment type="subcellular location">
    <subcellularLocation>
        <location evidence="1">Cytoplasm</location>
    </subcellularLocation>
</comment>
<comment type="similarity">
    <text evidence="1">Belongs to the peptidase S14 family.</text>
</comment>
<comment type="sequence caution" evidence="2">
    <conflict type="erroneous initiation">
        <sequence resource="EMBL-CDS" id="ABF64260"/>
    </conflict>
</comment>
<gene>
    <name evidence="1" type="primary">clpP</name>
    <name type="ordered locus">TM1040_1527</name>
</gene>
<dbReference type="EC" id="3.4.21.92" evidence="1"/>
<dbReference type="EMBL" id="CP000377">
    <property type="protein sequence ID" value="ABF64260.1"/>
    <property type="status" value="ALT_INIT"/>
    <property type="molecule type" value="Genomic_DNA"/>
</dbReference>
<dbReference type="RefSeq" id="WP_044026758.1">
    <property type="nucleotide sequence ID" value="NC_008044.1"/>
</dbReference>
<dbReference type="SMR" id="Q1GGF6"/>
<dbReference type="STRING" id="292414.TM1040_1527"/>
<dbReference type="MEROPS" id="S14.001"/>
<dbReference type="KEGG" id="sit:TM1040_1527"/>
<dbReference type="eggNOG" id="COG0740">
    <property type="taxonomic scope" value="Bacteria"/>
</dbReference>
<dbReference type="HOGENOM" id="CLU_058707_3_2_5"/>
<dbReference type="OrthoDB" id="9802800at2"/>
<dbReference type="Proteomes" id="UP000000636">
    <property type="component" value="Chromosome"/>
</dbReference>
<dbReference type="GO" id="GO:0005737">
    <property type="term" value="C:cytoplasm"/>
    <property type="evidence" value="ECO:0007669"/>
    <property type="project" value="UniProtKB-SubCell"/>
</dbReference>
<dbReference type="GO" id="GO:0009368">
    <property type="term" value="C:endopeptidase Clp complex"/>
    <property type="evidence" value="ECO:0007669"/>
    <property type="project" value="TreeGrafter"/>
</dbReference>
<dbReference type="GO" id="GO:0004176">
    <property type="term" value="F:ATP-dependent peptidase activity"/>
    <property type="evidence" value="ECO:0007669"/>
    <property type="project" value="InterPro"/>
</dbReference>
<dbReference type="GO" id="GO:0051117">
    <property type="term" value="F:ATPase binding"/>
    <property type="evidence" value="ECO:0007669"/>
    <property type="project" value="TreeGrafter"/>
</dbReference>
<dbReference type="GO" id="GO:0004252">
    <property type="term" value="F:serine-type endopeptidase activity"/>
    <property type="evidence" value="ECO:0007669"/>
    <property type="project" value="UniProtKB-UniRule"/>
</dbReference>
<dbReference type="GO" id="GO:0006515">
    <property type="term" value="P:protein quality control for misfolded or incompletely synthesized proteins"/>
    <property type="evidence" value="ECO:0007669"/>
    <property type="project" value="TreeGrafter"/>
</dbReference>
<dbReference type="CDD" id="cd07017">
    <property type="entry name" value="S14_ClpP_2"/>
    <property type="match status" value="1"/>
</dbReference>
<dbReference type="FunFam" id="3.90.226.10:FF:000001">
    <property type="entry name" value="ATP-dependent Clp protease proteolytic subunit"/>
    <property type="match status" value="1"/>
</dbReference>
<dbReference type="Gene3D" id="3.90.226.10">
    <property type="entry name" value="2-enoyl-CoA Hydratase, Chain A, domain 1"/>
    <property type="match status" value="1"/>
</dbReference>
<dbReference type="HAMAP" id="MF_00444">
    <property type="entry name" value="ClpP"/>
    <property type="match status" value="1"/>
</dbReference>
<dbReference type="InterPro" id="IPR001907">
    <property type="entry name" value="ClpP"/>
</dbReference>
<dbReference type="InterPro" id="IPR029045">
    <property type="entry name" value="ClpP/crotonase-like_dom_sf"/>
</dbReference>
<dbReference type="InterPro" id="IPR023562">
    <property type="entry name" value="ClpP/TepA"/>
</dbReference>
<dbReference type="InterPro" id="IPR033135">
    <property type="entry name" value="ClpP_His_AS"/>
</dbReference>
<dbReference type="InterPro" id="IPR018215">
    <property type="entry name" value="ClpP_Ser_AS"/>
</dbReference>
<dbReference type="NCBIfam" id="NF001368">
    <property type="entry name" value="PRK00277.1"/>
    <property type="match status" value="1"/>
</dbReference>
<dbReference type="NCBIfam" id="NF009205">
    <property type="entry name" value="PRK12553.1"/>
    <property type="match status" value="1"/>
</dbReference>
<dbReference type="PANTHER" id="PTHR10381">
    <property type="entry name" value="ATP-DEPENDENT CLP PROTEASE PROTEOLYTIC SUBUNIT"/>
    <property type="match status" value="1"/>
</dbReference>
<dbReference type="PANTHER" id="PTHR10381:SF70">
    <property type="entry name" value="ATP-DEPENDENT CLP PROTEASE PROTEOLYTIC SUBUNIT"/>
    <property type="match status" value="1"/>
</dbReference>
<dbReference type="Pfam" id="PF00574">
    <property type="entry name" value="CLP_protease"/>
    <property type="match status" value="1"/>
</dbReference>
<dbReference type="PRINTS" id="PR00127">
    <property type="entry name" value="CLPPROTEASEP"/>
</dbReference>
<dbReference type="SUPFAM" id="SSF52096">
    <property type="entry name" value="ClpP/crotonase"/>
    <property type="match status" value="1"/>
</dbReference>
<dbReference type="PROSITE" id="PS00382">
    <property type="entry name" value="CLP_PROTEASE_HIS"/>
    <property type="match status" value="1"/>
</dbReference>
<dbReference type="PROSITE" id="PS00381">
    <property type="entry name" value="CLP_PROTEASE_SER"/>
    <property type="match status" value="1"/>
</dbReference>
<evidence type="ECO:0000255" key="1">
    <source>
        <dbReference type="HAMAP-Rule" id="MF_00444"/>
    </source>
</evidence>
<evidence type="ECO:0000305" key="2"/>
<name>CLPP_RUEST</name>
<accession>Q1GGF6</accession>
<proteinExistence type="inferred from homology"/>
<keyword id="KW-0963">Cytoplasm</keyword>
<keyword id="KW-0378">Hydrolase</keyword>
<keyword id="KW-0645">Protease</keyword>
<keyword id="KW-1185">Reference proteome</keyword>
<keyword id="KW-0720">Serine protease</keyword>
<sequence>MIDPTETYMNTLVPMVVEQTSRGERAYDIFSRLLKERIIFLNGPVHDGMSSLIVAQLLHLEAENPSKEISMYINSPGGVVTSGLSIYDTMQYIKPKVSTLVIGQAASMGSLLLTAGEAGMRFSLPNSRVMVHQPSGGYQGQATDIMIHAEETLKLKRRLNEIYVKHTGQDYDTIEKALERDNFMSPEQAKEFGLIDEIVENRSKADDAES</sequence>
<organism>
    <name type="scientific">Ruegeria sp. (strain TM1040)</name>
    <name type="common">Silicibacter sp.</name>
    <dbReference type="NCBI Taxonomy" id="292414"/>
    <lineage>
        <taxon>Bacteria</taxon>
        <taxon>Pseudomonadati</taxon>
        <taxon>Pseudomonadota</taxon>
        <taxon>Alphaproteobacteria</taxon>
        <taxon>Rhodobacterales</taxon>
        <taxon>Roseobacteraceae</taxon>
        <taxon>Ruegeria</taxon>
    </lineage>
</organism>
<protein>
    <recommendedName>
        <fullName evidence="1">ATP-dependent Clp protease proteolytic subunit</fullName>
        <ecNumber evidence="1">3.4.21.92</ecNumber>
    </recommendedName>
    <alternativeName>
        <fullName evidence="1">Endopeptidase Clp</fullName>
    </alternativeName>
</protein>
<reference key="1">
    <citation type="submission" date="2006-05" db="EMBL/GenBank/DDBJ databases">
        <title>Complete sequence of chromosome of Silicibacter sp. TM1040.</title>
        <authorList>
            <consortium name="US DOE Joint Genome Institute"/>
            <person name="Copeland A."/>
            <person name="Lucas S."/>
            <person name="Lapidus A."/>
            <person name="Barry K."/>
            <person name="Detter J.C."/>
            <person name="Glavina del Rio T."/>
            <person name="Hammon N."/>
            <person name="Israni S."/>
            <person name="Dalin E."/>
            <person name="Tice H."/>
            <person name="Pitluck S."/>
            <person name="Brettin T."/>
            <person name="Bruce D."/>
            <person name="Han C."/>
            <person name="Tapia R."/>
            <person name="Goodwin L."/>
            <person name="Thompson L.S."/>
            <person name="Gilna P."/>
            <person name="Schmutz J."/>
            <person name="Larimer F."/>
            <person name="Land M."/>
            <person name="Hauser L."/>
            <person name="Kyrpides N."/>
            <person name="Kim E."/>
            <person name="Belas R."/>
            <person name="Moran M.A."/>
            <person name="Buchan A."/>
            <person name="Gonzalez J.M."/>
            <person name="Schell M.A."/>
            <person name="Sun F."/>
            <person name="Richardson P."/>
        </authorList>
    </citation>
    <scope>NUCLEOTIDE SEQUENCE [LARGE SCALE GENOMIC DNA]</scope>
    <source>
        <strain>TM1040</strain>
    </source>
</reference>
<feature type="chain" id="PRO_0000252849" description="ATP-dependent Clp protease proteolytic subunit">
    <location>
        <begin position="1"/>
        <end position="210"/>
    </location>
</feature>
<feature type="active site" description="Nucleophile" evidence="1">
    <location>
        <position position="107"/>
    </location>
</feature>
<feature type="active site" evidence="1">
    <location>
        <position position="132"/>
    </location>
</feature>